<reference key="1">
    <citation type="journal article" date="2005" name="Arch. Microbiol.">
        <title>The genome sequence of an anaerobic aromatic-degrading denitrifying bacterium, strain EbN1.</title>
        <authorList>
            <person name="Rabus R."/>
            <person name="Kube M."/>
            <person name="Heider J."/>
            <person name="Beck A."/>
            <person name="Heitmann K."/>
            <person name="Widdel F."/>
            <person name="Reinhardt R."/>
        </authorList>
    </citation>
    <scope>NUCLEOTIDE SEQUENCE [LARGE SCALE GENOMIC DNA]</scope>
    <source>
        <strain>DSM 19018 / LMG 30748 / EbN1</strain>
    </source>
</reference>
<proteinExistence type="inferred from homology"/>
<keyword id="KW-0001">2Fe-2S</keyword>
<keyword id="KW-0004">4Fe-4S</keyword>
<keyword id="KW-0093">Biotin biosynthesis</keyword>
<keyword id="KW-0408">Iron</keyword>
<keyword id="KW-0411">Iron-sulfur</keyword>
<keyword id="KW-0479">Metal-binding</keyword>
<keyword id="KW-1185">Reference proteome</keyword>
<keyword id="KW-0949">S-adenosyl-L-methionine</keyword>
<keyword id="KW-0808">Transferase</keyword>
<protein>
    <recommendedName>
        <fullName evidence="1">Biotin synthase</fullName>
        <ecNumber evidence="1">2.8.1.6</ecNumber>
    </recommendedName>
</protein>
<comment type="function">
    <text evidence="1">Catalyzes the conversion of dethiobiotin (DTB) to biotin by the insertion of a sulfur atom into dethiobiotin via a radical-based mechanism.</text>
</comment>
<comment type="catalytic activity">
    <reaction evidence="1">
        <text>(4R,5S)-dethiobiotin + (sulfur carrier)-SH + 2 reduced [2Fe-2S]-[ferredoxin] + 2 S-adenosyl-L-methionine = (sulfur carrier)-H + biotin + 2 5'-deoxyadenosine + 2 L-methionine + 2 oxidized [2Fe-2S]-[ferredoxin]</text>
        <dbReference type="Rhea" id="RHEA:22060"/>
        <dbReference type="Rhea" id="RHEA-COMP:10000"/>
        <dbReference type="Rhea" id="RHEA-COMP:10001"/>
        <dbReference type="Rhea" id="RHEA-COMP:14737"/>
        <dbReference type="Rhea" id="RHEA-COMP:14739"/>
        <dbReference type="ChEBI" id="CHEBI:17319"/>
        <dbReference type="ChEBI" id="CHEBI:29917"/>
        <dbReference type="ChEBI" id="CHEBI:33737"/>
        <dbReference type="ChEBI" id="CHEBI:33738"/>
        <dbReference type="ChEBI" id="CHEBI:57586"/>
        <dbReference type="ChEBI" id="CHEBI:57844"/>
        <dbReference type="ChEBI" id="CHEBI:59789"/>
        <dbReference type="ChEBI" id="CHEBI:64428"/>
        <dbReference type="ChEBI" id="CHEBI:149473"/>
        <dbReference type="EC" id="2.8.1.6"/>
    </reaction>
</comment>
<comment type="cofactor">
    <cofactor evidence="1">
        <name>[4Fe-4S] cluster</name>
        <dbReference type="ChEBI" id="CHEBI:49883"/>
    </cofactor>
    <text evidence="1">Binds 1 [4Fe-4S] cluster. The cluster is coordinated with 3 cysteines and an exchangeable S-adenosyl-L-methionine.</text>
</comment>
<comment type="cofactor">
    <cofactor evidence="1">
        <name>[2Fe-2S] cluster</name>
        <dbReference type="ChEBI" id="CHEBI:190135"/>
    </cofactor>
    <text evidence="1">Binds 1 [2Fe-2S] cluster. The cluster is coordinated with 3 cysteines and 1 arginine.</text>
</comment>
<comment type="pathway">
    <text evidence="1">Cofactor biosynthesis; biotin biosynthesis; biotin from 7,8-diaminononanoate: step 2/2.</text>
</comment>
<comment type="subunit">
    <text evidence="1">Homodimer.</text>
</comment>
<comment type="similarity">
    <text evidence="1">Belongs to the radical SAM superfamily. Biotin synthase family.</text>
</comment>
<comment type="sequence caution" evidence="3">
    <conflict type="erroneous initiation">
        <sequence resource="EMBL-CDS" id="CAI06685"/>
    </conflict>
</comment>
<gene>
    <name evidence="1" type="primary">bioB</name>
    <name type="ordered locus">AZOSEA05630</name>
    <name type="ORF">ebA1066</name>
</gene>
<evidence type="ECO:0000255" key="1">
    <source>
        <dbReference type="HAMAP-Rule" id="MF_01694"/>
    </source>
</evidence>
<evidence type="ECO:0000255" key="2">
    <source>
        <dbReference type="PROSITE-ProRule" id="PRU01266"/>
    </source>
</evidence>
<evidence type="ECO:0000305" key="3"/>
<sequence length="326" mass="35517">MTSAPAAERPAAPAVPRIKWTVVEAVELFEQPFMDLLFRAQQVHRAHFDPNAVQRSTLLSIKTGGCSEDCGYCSQSTRHNTGLDREQLLKVAEVVEHAKAAKAKGASRFCMGAAWRGPKDKDMETVLAMVREVKALGLETCVTLGMLKGDQALQLKEAGLDYYNHNLDTAPEFYGQVITTHTLADRLDTLEQVRGAGINVCSGGIVGMGEGRRSRAGLLVQLANMASPPESVPINNLVPVPGTPLENVDKIDPFEFVRTIAAARIMMPTSFVRLSAGRQQMSDELQALCFMAGANSIFYGDRLLTTDNPDTDRDEALFARLGLRPV</sequence>
<feature type="chain" id="PRO_0000381213" description="Biotin synthase">
    <location>
        <begin position="1"/>
        <end position="326"/>
    </location>
</feature>
<feature type="domain" description="Radical SAM core" evidence="2">
    <location>
        <begin position="51"/>
        <end position="275"/>
    </location>
</feature>
<feature type="binding site" evidence="1">
    <location>
        <position position="66"/>
    </location>
    <ligand>
        <name>[4Fe-4S] cluster</name>
        <dbReference type="ChEBI" id="CHEBI:49883"/>
        <note>4Fe-4S-S-AdoMet</note>
    </ligand>
</feature>
<feature type="binding site" evidence="1">
    <location>
        <position position="70"/>
    </location>
    <ligand>
        <name>[4Fe-4S] cluster</name>
        <dbReference type="ChEBI" id="CHEBI:49883"/>
        <note>4Fe-4S-S-AdoMet</note>
    </ligand>
</feature>
<feature type="binding site" evidence="1">
    <location>
        <position position="73"/>
    </location>
    <ligand>
        <name>[4Fe-4S] cluster</name>
        <dbReference type="ChEBI" id="CHEBI:49883"/>
        <note>4Fe-4S-S-AdoMet</note>
    </ligand>
</feature>
<feature type="binding site" evidence="1">
    <location>
        <position position="110"/>
    </location>
    <ligand>
        <name>[2Fe-2S] cluster</name>
        <dbReference type="ChEBI" id="CHEBI:190135"/>
    </ligand>
</feature>
<feature type="binding site" evidence="1">
    <location>
        <position position="141"/>
    </location>
    <ligand>
        <name>[2Fe-2S] cluster</name>
        <dbReference type="ChEBI" id="CHEBI:190135"/>
    </ligand>
</feature>
<feature type="binding site" evidence="1">
    <location>
        <position position="201"/>
    </location>
    <ligand>
        <name>[2Fe-2S] cluster</name>
        <dbReference type="ChEBI" id="CHEBI:190135"/>
    </ligand>
</feature>
<feature type="binding site" evidence="1">
    <location>
        <position position="273"/>
    </location>
    <ligand>
        <name>[2Fe-2S] cluster</name>
        <dbReference type="ChEBI" id="CHEBI:190135"/>
    </ligand>
</feature>
<organism>
    <name type="scientific">Aromatoleum aromaticum (strain DSM 19018 / LMG 30748 / EbN1)</name>
    <name type="common">Azoarcus sp. (strain EbN1)</name>
    <dbReference type="NCBI Taxonomy" id="76114"/>
    <lineage>
        <taxon>Bacteria</taxon>
        <taxon>Pseudomonadati</taxon>
        <taxon>Pseudomonadota</taxon>
        <taxon>Betaproteobacteria</taxon>
        <taxon>Rhodocyclales</taxon>
        <taxon>Rhodocyclaceae</taxon>
        <taxon>Aromatoleum</taxon>
    </lineage>
</organism>
<dbReference type="EC" id="2.8.1.6" evidence="1"/>
<dbReference type="EMBL" id="CR555306">
    <property type="protein sequence ID" value="CAI06685.1"/>
    <property type="status" value="ALT_INIT"/>
    <property type="molecule type" value="Genomic_DNA"/>
</dbReference>
<dbReference type="RefSeq" id="WP_011236415.1">
    <property type="nucleotide sequence ID" value="NC_006513.1"/>
</dbReference>
<dbReference type="SMR" id="Q5P7M6"/>
<dbReference type="STRING" id="76114.ebA1066"/>
<dbReference type="KEGG" id="eba:ebA1066"/>
<dbReference type="eggNOG" id="COG0502">
    <property type="taxonomic scope" value="Bacteria"/>
</dbReference>
<dbReference type="HOGENOM" id="CLU_033172_1_2_4"/>
<dbReference type="OrthoDB" id="9786826at2"/>
<dbReference type="UniPathway" id="UPA00078">
    <property type="reaction ID" value="UER00162"/>
</dbReference>
<dbReference type="Proteomes" id="UP000006552">
    <property type="component" value="Chromosome"/>
</dbReference>
<dbReference type="GO" id="GO:0051537">
    <property type="term" value="F:2 iron, 2 sulfur cluster binding"/>
    <property type="evidence" value="ECO:0007669"/>
    <property type="project" value="UniProtKB-KW"/>
</dbReference>
<dbReference type="GO" id="GO:0051539">
    <property type="term" value="F:4 iron, 4 sulfur cluster binding"/>
    <property type="evidence" value="ECO:0007669"/>
    <property type="project" value="UniProtKB-KW"/>
</dbReference>
<dbReference type="GO" id="GO:0004076">
    <property type="term" value="F:biotin synthase activity"/>
    <property type="evidence" value="ECO:0007669"/>
    <property type="project" value="UniProtKB-UniRule"/>
</dbReference>
<dbReference type="GO" id="GO:0005506">
    <property type="term" value="F:iron ion binding"/>
    <property type="evidence" value="ECO:0007669"/>
    <property type="project" value="UniProtKB-UniRule"/>
</dbReference>
<dbReference type="GO" id="GO:0009102">
    <property type="term" value="P:biotin biosynthetic process"/>
    <property type="evidence" value="ECO:0007669"/>
    <property type="project" value="UniProtKB-UniRule"/>
</dbReference>
<dbReference type="CDD" id="cd01335">
    <property type="entry name" value="Radical_SAM"/>
    <property type="match status" value="1"/>
</dbReference>
<dbReference type="FunFam" id="3.20.20.70:FF:000011">
    <property type="entry name" value="Biotin synthase"/>
    <property type="match status" value="1"/>
</dbReference>
<dbReference type="Gene3D" id="3.20.20.70">
    <property type="entry name" value="Aldolase class I"/>
    <property type="match status" value="1"/>
</dbReference>
<dbReference type="HAMAP" id="MF_01694">
    <property type="entry name" value="BioB"/>
    <property type="match status" value="1"/>
</dbReference>
<dbReference type="InterPro" id="IPR013785">
    <property type="entry name" value="Aldolase_TIM"/>
</dbReference>
<dbReference type="InterPro" id="IPR010722">
    <property type="entry name" value="BATS_dom"/>
</dbReference>
<dbReference type="InterPro" id="IPR002684">
    <property type="entry name" value="Biotin_synth/BioAB"/>
</dbReference>
<dbReference type="InterPro" id="IPR024177">
    <property type="entry name" value="Biotin_synthase"/>
</dbReference>
<dbReference type="InterPro" id="IPR006638">
    <property type="entry name" value="Elp3/MiaA/NifB-like_rSAM"/>
</dbReference>
<dbReference type="InterPro" id="IPR007197">
    <property type="entry name" value="rSAM"/>
</dbReference>
<dbReference type="NCBIfam" id="TIGR00433">
    <property type="entry name" value="bioB"/>
    <property type="match status" value="1"/>
</dbReference>
<dbReference type="PANTHER" id="PTHR22976">
    <property type="entry name" value="BIOTIN SYNTHASE"/>
    <property type="match status" value="1"/>
</dbReference>
<dbReference type="PANTHER" id="PTHR22976:SF2">
    <property type="entry name" value="BIOTIN SYNTHASE, MITOCHONDRIAL"/>
    <property type="match status" value="1"/>
</dbReference>
<dbReference type="Pfam" id="PF06968">
    <property type="entry name" value="BATS"/>
    <property type="match status" value="1"/>
</dbReference>
<dbReference type="Pfam" id="PF04055">
    <property type="entry name" value="Radical_SAM"/>
    <property type="match status" value="1"/>
</dbReference>
<dbReference type="PIRSF" id="PIRSF001619">
    <property type="entry name" value="Biotin_synth"/>
    <property type="match status" value="1"/>
</dbReference>
<dbReference type="SFLD" id="SFLDG01060">
    <property type="entry name" value="BATS_domain_containing"/>
    <property type="match status" value="1"/>
</dbReference>
<dbReference type="SFLD" id="SFLDF00272">
    <property type="entry name" value="biotin_synthase"/>
    <property type="match status" value="1"/>
</dbReference>
<dbReference type="SMART" id="SM00876">
    <property type="entry name" value="BATS"/>
    <property type="match status" value="1"/>
</dbReference>
<dbReference type="SMART" id="SM00729">
    <property type="entry name" value="Elp3"/>
    <property type="match status" value="1"/>
</dbReference>
<dbReference type="SUPFAM" id="SSF102114">
    <property type="entry name" value="Radical SAM enzymes"/>
    <property type="match status" value="1"/>
</dbReference>
<dbReference type="PROSITE" id="PS51918">
    <property type="entry name" value="RADICAL_SAM"/>
    <property type="match status" value="1"/>
</dbReference>
<accession>Q5P7M6</accession>
<name>BIOB_AROAE</name>